<sequence length="759" mass="87840">MWRLKVADGGNDPYIYSMNNFIGRQIWEFDPNAGTPEERAEIERLRHHFTKNRHKGFPSADLLWRVQLLREKNFKQSIPAVKVGDGEEISYEMALDAMRRGAHFLAAIQASDGHWPSETSGPLFYVCPLLICMYIMGFMDKVFSPEHKKEMMRYIYNHQNEDGGWGLHVGGHSNMFCTTFNYISLRLLGEEPDVEAVCKARNWIHDHDGVTSILSWGKTWLSILNVFDWSASNPMPPEYWMLPTWVPIHPSNMMCYTRITYMPMSYLYGKRFQAPLTPLVLQLRDELHTQPYDQINWRKVRHMCATEDLYFPHPFVQDLLWDTLYLLSEPLMTRWPFNKLIRQKALNETMRHIHYEDENSRYITIGCVEKPLCMLACWVEDPNSEYVKKHLARIPDYLWMAEDGMKMQSFGSQSWDAALAMQALLSCNITREIGSVLNSGHDFIKNSQVRNNPPGDYKSMFRYMSKGSWTFSDCDHGWQVSDCTAENLKCCLLLSLLPPDIVGEKMEPERFYDAVNVILNMQSKNGGLPAWEPASSYYWMEWLNPVEFLEDLIIEHQHVECTSSALQAILLFRKQYPGHRRKEINNFINKAVQFLQDIQLPDGSWYGNWGICYTYGTWFALKALSMAGKTYENCEAVRKGANFLRKIQNPEGGFGESYLSCPYKRYIPLDGKRSNLVQTAWGMMGLICAGQADVDPTPIHRAAKLLINSQTEDGDFPQEEITGEFFKNCTLHFAAFREVFPVMALGEYCNKVPLPSKKK</sequence>
<protein>
    <recommendedName>
        <fullName>Isomultiflorenol synthase</fullName>
        <shortName>LcIMS1</shortName>
        <ecNumber>5.4.99.36</ecNumber>
    </recommendedName>
</protein>
<feature type="chain" id="PRO_0000412991" description="Isomultiflorenol synthase">
    <location>
        <begin position="1"/>
        <end position="759"/>
    </location>
</feature>
<feature type="repeat" description="PFTB 1">
    <location>
        <begin position="148"/>
        <end position="189"/>
    </location>
</feature>
<feature type="repeat" description="PFTB 2">
    <location>
        <begin position="588"/>
        <end position="628"/>
    </location>
</feature>
<feature type="repeat" description="PFTB 3">
    <location>
        <begin position="637"/>
        <end position="678"/>
    </location>
</feature>
<feature type="repeat" description="PFTB 4">
    <location>
        <begin position="699"/>
        <end position="743"/>
    </location>
</feature>
<feature type="active site" description="Proton donor" evidence="1">
    <location>
        <position position="482"/>
    </location>
</feature>
<gene>
    <name type="primary">IMS1</name>
</gene>
<name>IMFS_LUFAE</name>
<comment type="function">
    <text evidence="2">Oxidosqualene cyclase involved in the biosynthesis of bryonolic acid. Converts oxidosqualene to isomultiflorenol.</text>
</comment>
<comment type="catalytic activity">
    <reaction evidence="2">
        <text>(S)-2,3-epoxysqualene = isomultiflorenol</text>
        <dbReference type="Rhea" id="RHEA:30451"/>
        <dbReference type="ChEBI" id="CHEBI:15441"/>
        <dbReference type="ChEBI" id="CHEBI:62262"/>
        <dbReference type="EC" id="5.4.99.36"/>
    </reaction>
</comment>
<comment type="miscellaneous">
    <text>In cultured cells, IMS1 mRNA expression is high between days 16 and 20 and precedes the accumulation of bryonolic acid.</text>
</comment>
<comment type="similarity">
    <text evidence="3">Belongs to the terpene cyclase/mutase family.</text>
</comment>
<reference key="1">
    <citation type="journal article" date="2001" name="Eur. J. Biochem.">
        <title>Molecular cloning and characterization of isomultiflorenol synthase, a new triterpene synthase from Luffa cylindrica, involved in biosynthesis of bryonolic acid.</title>
        <authorList>
            <person name="Hayashi H."/>
            <person name="Huang P."/>
            <person name="Inoue K."/>
            <person name="Hiraoka N."/>
            <person name="Ikeshiro Y."/>
            <person name="Yazaki K."/>
            <person name="Tanaka S."/>
            <person name="Kushiro T."/>
            <person name="Shibuya M."/>
            <person name="Ebizuka Y."/>
        </authorList>
    </citation>
    <scope>NUCLEOTIDE SEQUENCE [MRNA]</scope>
    <scope>FUNCTION</scope>
    <scope>CATALYTIC ACTIVITY</scope>
    <scope>INDUCTION</scope>
</reference>
<organism>
    <name type="scientific">Luffa aegyptiaca</name>
    <name type="common">Sponge gourd</name>
    <name type="synonym">Luffa cylindrica</name>
    <dbReference type="NCBI Taxonomy" id="3670"/>
    <lineage>
        <taxon>Eukaryota</taxon>
        <taxon>Viridiplantae</taxon>
        <taxon>Streptophyta</taxon>
        <taxon>Embryophyta</taxon>
        <taxon>Tracheophyta</taxon>
        <taxon>Spermatophyta</taxon>
        <taxon>Magnoliopsida</taxon>
        <taxon>eudicotyledons</taxon>
        <taxon>Gunneridae</taxon>
        <taxon>Pentapetalae</taxon>
        <taxon>rosids</taxon>
        <taxon>fabids</taxon>
        <taxon>Cucurbitales</taxon>
        <taxon>Cucurbitaceae</taxon>
        <taxon>Sicyoeae</taxon>
        <taxon>Luffa</taxon>
    </lineage>
</organism>
<proteinExistence type="evidence at protein level"/>
<evidence type="ECO:0000250" key="1">
    <source>
        <dbReference type="UniProtKB" id="P48449"/>
    </source>
</evidence>
<evidence type="ECO:0000269" key="2">
    <source>
    </source>
</evidence>
<evidence type="ECO:0000305" key="3"/>
<accession>Q948R6</accession>
<dbReference type="EC" id="5.4.99.36"/>
<dbReference type="EMBL" id="AB058643">
    <property type="protein sequence ID" value="BAB68529.1"/>
    <property type="molecule type" value="mRNA"/>
</dbReference>
<dbReference type="SMR" id="Q948R6"/>
<dbReference type="KEGG" id="ag:BAB68529"/>
<dbReference type="BRENDA" id="5.4.99.36">
    <property type="organism ID" value="3083"/>
</dbReference>
<dbReference type="GO" id="GO:0005811">
    <property type="term" value="C:lipid droplet"/>
    <property type="evidence" value="ECO:0007669"/>
    <property type="project" value="InterPro"/>
</dbReference>
<dbReference type="GO" id="GO:0042300">
    <property type="term" value="F:beta-amyrin synthase activity"/>
    <property type="evidence" value="ECO:0007669"/>
    <property type="project" value="UniProtKB-ARBA"/>
</dbReference>
<dbReference type="GO" id="GO:0016104">
    <property type="term" value="P:triterpenoid biosynthetic process"/>
    <property type="evidence" value="ECO:0007669"/>
    <property type="project" value="InterPro"/>
</dbReference>
<dbReference type="CDD" id="cd02892">
    <property type="entry name" value="SQCY_1"/>
    <property type="match status" value="1"/>
</dbReference>
<dbReference type="FunFam" id="1.50.10.20:FF:000011">
    <property type="entry name" value="Terpene cyclase/mutase family member"/>
    <property type="match status" value="1"/>
</dbReference>
<dbReference type="Gene3D" id="1.50.10.20">
    <property type="match status" value="2"/>
</dbReference>
<dbReference type="InterPro" id="IPR032696">
    <property type="entry name" value="SQ_cyclase_C"/>
</dbReference>
<dbReference type="InterPro" id="IPR032697">
    <property type="entry name" value="SQ_cyclase_N"/>
</dbReference>
<dbReference type="InterPro" id="IPR018333">
    <property type="entry name" value="Squalene_cyclase"/>
</dbReference>
<dbReference type="InterPro" id="IPR002365">
    <property type="entry name" value="Terpene_synthase_CS"/>
</dbReference>
<dbReference type="InterPro" id="IPR008930">
    <property type="entry name" value="Terpenoid_cyclase/PrenylTrfase"/>
</dbReference>
<dbReference type="NCBIfam" id="TIGR01787">
    <property type="entry name" value="squalene_cyclas"/>
    <property type="match status" value="1"/>
</dbReference>
<dbReference type="PANTHER" id="PTHR11764:SF58">
    <property type="entry name" value="BETA-AMYRIN SYNTHASE-RELATED"/>
    <property type="match status" value="1"/>
</dbReference>
<dbReference type="PANTHER" id="PTHR11764">
    <property type="entry name" value="TERPENE CYCLASE/MUTASE FAMILY MEMBER"/>
    <property type="match status" value="1"/>
</dbReference>
<dbReference type="Pfam" id="PF13243">
    <property type="entry name" value="SQHop_cyclase_C"/>
    <property type="match status" value="1"/>
</dbReference>
<dbReference type="Pfam" id="PF13249">
    <property type="entry name" value="SQHop_cyclase_N"/>
    <property type="match status" value="1"/>
</dbReference>
<dbReference type="SFLD" id="SFLDG01016">
    <property type="entry name" value="Prenyltransferase_Like_2"/>
    <property type="match status" value="1"/>
</dbReference>
<dbReference type="SUPFAM" id="SSF48239">
    <property type="entry name" value="Terpenoid cyclases/Protein prenyltransferases"/>
    <property type="match status" value="2"/>
</dbReference>
<dbReference type="PROSITE" id="PS01074">
    <property type="entry name" value="TERPENE_SYNTHASES"/>
    <property type="match status" value="1"/>
</dbReference>
<keyword id="KW-0413">Isomerase</keyword>
<keyword id="KW-0677">Repeat</keyword>